<proteinExistence type="evidence at protein level"/>
<reference key="1">
    <citation type="journal article" date="2001" name="J. Biol. Chem.">
        <title>Lysyl oxidase-like protein from bovine aorta. Isolation and maturation to an active form by bone morphogenetic protein-1.</title>
        <authorList>
            <person name="Borel A."/>
            <person name="Eichenberger D."/>
            <person name="Farjanel J."/>
            <person name="Kessler E."/>
            <person name="Gleyzal C."/>
            <person name="Hulmes D.J.S."/>
            <person name="Sommer P."/>
            <person name="Font B."/>
        </authorList>
    </citation>
    <scope>NUCLEOTIDE SEQUENCE [MRNA]</scope>
    <scope>PROTEIN SEQUENCE OF 92-100; 131-140 AND 355-364</scope>
    <scope>PROTEOLYTIC PROCESSING</scope>
    <scope>FUNCTION</scope>
    <scope>CATALYTIC ACTIVITY</scope>
    <source>
        <tissue>Skin</tissue>
    </source>
</reference>
<organism>
    <name type="scientific">Bos taurus</name>
    <name type="common">Bovine</name>
    <dbReference type="NCBI Taxonomy" id="9913"/>
    <lineage>
        <taxon>Eukaryota</taxon>
        <taxon>Metazoa</taxon>
        <taxon>Chordata</taxon>
        <taxon>Craniata</taxon>
        <taxon>Vertebrata</taxon>
        <taxon>Euteleostomi</taxon>
        <taxon>Mammalia</taxon>
        <taxon>Eutheria</taxon>
        <taxon>Laurasiatheria</taxon>
        <taxon>Artiodactyla</taxon>
        <taxon>Ruminantia</taxon>
        <taxon>Pecora</taxon>
        <taxon>Bovidae</taxon>
        <taxon>Bovinae</taxon>
        <taxon>Bos</taxon>
    </lineage>
</organism>
<gene>
    <name type="primary">LOXL1</name>
</gene>
<sequence length="591" mass="64496">MALALTGWQLVWGACVCVLVHGQQAPPGQGSDPGRWRQLIQWENNGQVYSLLNSGAEYVPPGPQGSEANSRVLLAGAPQAPPRRRGGLRRRQAPSLPLPGRVGSDTVRGQARHPFGFGQVPDNWREVAVGDSTGMARARTSVSQQRHGGSASSVSASASAFASTYRQPSSFPQQQFPYPQAPFVSQYETYDPSTRTYDQGYVYYRSASGGLGAAAVASAGVVYPFQPRARYEEYGGGGGEEQPEYPPQGFYPAAPERPYAPQPADGLDRRYSHSLYHEGTAGLEPAYPDPGPDAAQPNGGGGGGTYGGGGGDPRLGWYPPYGNMPPEAYSPPRVVEPQPPFRVLEPPYLPVRSSDAPPPGSERNGAQQGRLSVGSVYRPNQNGRGLPDLVPDPNYVQASTYVQRAHLYSLRCAAEEKCLASTAYAPEATDYDVRVLLRFPQRVKNQGTADFLPNRPRHTWEWHSCHQHYHSMDEFSHYDLLDAATGKKVAEGHKASFCLEDSTCDFGNLKRYACTSHTQGLSPGCYDTYNADIDCQWIDITDVQPGNYILKVHVNPKYIVLESDFTNNVVRCNIHYTGRYVSTTNCKIVQS</sequence>
<comment type="function">
    <text evidence="3 7">Catalyzes the oxidative deamination of lysine and hydroxylysine residues in collagen and elastin, resulting in the formation of covalent cross-linkages, and the stabilization of collagen and elastin fibers (PubMed:11684696). Essential for the elastic fiber homeostasis and for their maintenance at adult age (By similarity).</text>
</comment>
<comment type="catalytic activity">
    <reaction evidence="7">
        <text>L-lysyl-[protein] + O2 + H2O = (S)-2-amino-6-oxohexanoyl-[protein] + H2O2 + NH4(+)</text>
        <dbReference type="Rhea" id="RHEA:24544"/>
        <dbReference type="Rhea" id="RHEA-COMP:9752"/>
        <dbReference type="Rhea" id="RHEA-COMP:12448"/>
        <dbReference type="ChEBI" id="CHEBI:15377"/>
        <dbReference type="ChEBI" id="CHEBI:15379"/>
        <dbReference type="ChEBI" id="CHEBI:16240"/>
        <dbReference type="ChEBI" id="CHEBI:28938"/>
        <dbReference type="ChEBI" id="CHEBI:29969"/>
        <dbReference type="ChEBI" id="CHEBI:131803"/>
        <dbReference type="EC" id="1.4.3.13"/>
    </reaction>
</comment>
<comment type="cofactor">
    <cofactor evidence="1">
        <name>Cu cation</name>
        <dbReference type="ChEBI" id="CHEBI:23378"/>
    </cofactor>
</comment>
<comment type="cofactor">
    <cofactor evidence="2">
        <name>lysine tyrosylquinone residue</name>
        <dbReference type="ChEBI" id="CHEBI:20489"/>
    </cofactor>
    <text evidence="2">Contains 1 lysine tyrosylquinone.</text>
</comment>
<comment type="subunit">
    <text evidence="4">Interacts (via propeptide) with EFEMP2. Interacts with FBLN5.</text>
</comment>
<comment type="subcellular location">
    <subcellularLocation>
        <location evidence="3">Secreted</location>
        <location evidence="3">Extracellular space</location>
    </subcellularLocation>
    <subcellularLocation>
        <location evidence="3">Secreted</location>
        <location evidence="3">Extracellular space</location>
        <location evidence="3">Extracellular matrix</location>
    </subcellularLocation>
</comment>
<comment type="PTM">
    <text evidence="2">The lysine tyrosylquinone cross-link (LTQ) is generated by condensation of the epsilon-amino group of a lysine with a topaquinone produced by oxidation of tyrosine.</text>
</comment>
<comment type="PTM">
    <text evidence="7">Proteolytic processing by a furin-like protease causes removal of N-terminal propeptide resulting in an enzyme largely inactive, but further proteolytic processing by BMP1 results in enzyme activation.</text>
</comment>
<comment type="similarity">
    <text evidence="8">Belongs to the lysyl oxidase family.</text>
</comment>
<accession>Q95L39</accession>
<feature type="signal peptide" evidence="5">
    <location>
        <begin position="1"/>
        <end position="22"/>
    </location>
</feature>
<feature type="propeptide" id="PRO_0000045438" evidence="7">
    <location>
        <begin position="23"/>
        <end position="91"/>
    </location>
</feature>
<feature type="chain" id="PRO_0000045439" description="Lysyl oxidase homolog 1">
    <location>
        <begin position="92"/>
        <end position="591"/>
    </location>
</feature>
<feature type="region of interest" description="Disordered" evidence="6">
    <location>
        <begin position="77"/>
        <end position="107"/>
    </location>
</feature>
<feature type="region of interest" description="Disordered" evidence="6">
    <location>
        <begin position="233"/>
        <end position="373"/>
    </location>
</feature>
<feature type="region of interest" description="Interaction with FBLN5" evidence="3">
    <location>
        <begin position="319"/>
        <end position="386"/>
    </location>
</feature>
<feature type="region of interest" description="Lysyl-oxidase like">
    <location>
        <begin position="387"/>
        <end position="591"/>
    </location>
</feature>
<feature type="compositionally biased region" description="Basic residues" evidence="6">
    <location>
        <begin position="82"/>
        <end position="92"/>
    </location>
</feature>
<feature type="compositionally biased region" description="Gly residues" evidence="6">
    <location>
        <begin position="298"/>
        <end position="313"/>
    </location>
</feature>
<feature type="binding site" evidence="5">
    <location>
        <position position="466"/>
    </location>
    <ligand>
        <name>Cu cation</name>
        <dbReference type="ChEBI" id="CHEBI:23378"/>
    </ligand>
</feature>
<feature type="binding site" evidence="5">
    <location>
        <position position="468"/>
    </location>
    <ligand>
        <name>Cu cation</name>
        <dbReference type="ChEBI" id="CHEBI:23378"/>
    </ligand>
</feature>
<feature type="binding site" evidence="5">
    <location>
        <position position="470"/>
    </location>
    <ligand>
        <name>Cu cation</name>
        <dbReference type="ChEBI" id="CHEBI:23378"/>
    </ligand>
</feature>
<feature type="site" description="Cleavage; by furin-like protease" evidence="7">
    <location>
        <begin position="91"/>
        <end position="92"/>
    </location>
</feature>
<feature type="site" description="Cleavage; by BMP1" evidence="7">
    <location>
        <begin position="130"/>
        <end position="131"/>
    </location>
</feature>
<feature type="site" description="Cleavage; by BMP1" evidence="4">
    <location>
        <begin position="147"/>
        <end position="148"/>
    </location>
</feature>
<feature type="site" description="Cleavage; by ADAMTS14" evidence="4">
    <location>
        <begin position="213"/>
        <end position="214"/>
    </location>
</feature>
<feature type="site" description="Cleavage; by BMP1" evidence="7">
    <location>
        <begin position="354"/>
        <end position="355"/>
    </location>
</feature>
<feature type="modified residue" description="2',4',5'-topaquinone" evidence="2">
    <location>
        <position position="529"/>
    </location>
</feature>
<feature type="disulfide bond" evidence="2">
    <location>
        <begin position="412"/>
        <end position="418"/>
    </location>
</feature>
<feature type="disulfide bond" evidence="2">
    <location>
        <begin position="465"/>
        <end position="514"/>
    </location>
</feature>
<feature type="disulfide bond" evidence="2">
    <location>
        <begin position="498"/>
        <end position="504"/>
    </location>
</feature>
<feature type="disulfide bond" evidence="2">
    <location>
        <begin position="525"/>
        <end position="535"/>
    </location>
</feature>
<feature type="disulfide bond" evidence="2">
    <location>
        <begin position="572"/>
        <end position="586"/>
    </location>
</feature>
<feature type="cross-link" description="Lysine tyrosylquinone (Lys-Tyr)" evidence="2">
    <location>
        <begin position="494"/>
        <end position="529"/>
    </location>
</feature>
<name>LOXL1_BOVIN</name>
<dbReference type="EC" id="1.4.3.13" evidence="7"/>
<dbReference type="EMBL" id="AF421185">
    <property type="protein sequence ID" value="AAL13312.1"/>
    <property type="molecule type" value="mRNA"/>
</dbReference>
<dbReference type="RefSeq" id="NP_776808.1">
    <property type="nucleotide sequence ID" value="NM_174383.2"/>
</dbReference>
<dbReference type="SMR" id="Q95L39"/>
<dbReference type="FunCoup" id="Q95L39">
    <property type="interactions" value="163"/>
</dbReference>
<dbReference type="STRING" id="9913.ENSBTAP00000011978"/>
<dbReference type="PaxDb" id="9913-ENSBTAP00000011978"/>
<dbReference type="GeneID" id="281903"/>
<dbReference type="KEGG" id="bta:281903"/>
<dbReference type="CTD" id="4016"/>
<dbReference type="eggNOG" id="ENOG502QWET">
    <property type="taxonomic scope" value="Eukaryota"/>
</dbReference>
<dbReference type="InParanoid" id="Q95L39"/>
<dbReference type="OrthoDB" id="547291at2759"/>
<dbReference type="Proteomes" id="UP000009136">
    <property type="component" value="Unplaced"/>
</dbReference>
<dbReference type="GO" id="GO:0062023">
    <property type="term" value="C:collagen-containing extracellular matrix"/>
    <property type="evidence" value="ECO:0000318"/>
    <property type="project" value="GO_Central"/>
</dbReference>
<dbReference type="GO" id="GO:0005615">
    <property type="term" value="C:extracellular space"/>
    <property type="evidence" value="ECO:0000250"/>
    <property type="project" value="UniProtKB"/>
</dbReference>
<dbReference type="GO" id="GO:0005507">
    <property type="term" value="F:copper ion binding"/>
    <property type="evidence" value="ECO:0007669"/>
    <property type="project" value="InterPro"/>
</dbReference>
<dbReference type="GO" id="GO:0004720">
    <property type="term" value="F:protein-lysine 6-oxidase activity"/>
    <property type="evidence" value="ECO:0000250"/>
    <property type="project" value="UniProtKB"/>
</dbReference>
<dbReference type="GO" id="GO:0030199">
    <property type="term" value="P:collagen fibril organization"/>
    <property type="evidence" value="ECO:0000318"/>
    <property type="project" value="GO_Central"/>
</dbReference>
<dbReference type="InterPro" id="IPR050912">
    <property type="entry name" value="LOX-like_protein"/>
</dbReference>
<dbReference type="InterPro" id="IPR001695">
    <property type="entry name" value="Lysyl_oxidase"/>
</dbReference>
<dbReference type="InterPro" id="IPR019828">
    <property type="entry name" value="Lysyl_oxidase_CS"/>
</dbReference>
<dbReference type="PANTHER" id="PTHR45817:SF8">
    <property type="entry name" value="LYSYL OXIDASE HOMOLOG 1"/>
    <property type="match status" value="1"/>
</dbReference>
<dbReference type="PANTHER" id="PTHR45817">
    <property type="entry name" value="LYSYL OXIDASE-LIKE-RELATED"/>
    <property type="match status" value="1"/>
</dbReference>
<dbReference type="Pfam" id="PF01186">
    <property type="entry name" value="Lysyl_oxidase"/>
    <property type="match status" value="1"/>
</dbReference>
<dbReference type="PRINTS" id="PR00074">
    <property type="entry name" value="LYSYLOXIDASE"/>
</dbReference>
<dbReference type="PROSITE" id="PS00926">
    <property type="entry name" value="LYSYL_OXIDASE"/>
    <property type="match status" value="1"/>
</dbReference>
<protein>
    <recommendedName>
        <fullName>Lysyl oxidase homolog 1</fullName>
        <ecNumber evidence="7">1.4.3.13</ecNumber>
    </recommendedName>
    <alternativeName>
        <fullName>Lysyl oxidase-like protein 1</fullName>
    </alternativeName>
</protein>
<keyword id="KW-0165">Cleavage on pair of basic residues</keyword>
<keyword id="KW-0186">Copper</keyword>
<keyword id="KW-0903">Direct protein sequencing</keyword>
<keyword id="KW-1015">Disulfide bond</keyword>
<keyword id="KW-0272">Extracellular matrix</keyword>
<keyword id="KW-0886">LTQ</keyword>
<keyword id="KW-0479">Metal-binding</keyword>
<keyword id="KW-0560">Oxidoreductase</keyword>
<keyword id="KW-1185">Reference proteome</keyword>
<keyword id="KW-0964">Secreted</keyword>
<keyword id="KW-0732">Signal</keyword>
<keyword id="KW-0801">TPQ</keyword>
<evidence type="ECO:0000250" key="1">
    <source>
        <dbReference type="UniProtKB" id="P16636"/>
    </source>
</evidence>
<evidence type="ECO:0000250" key="2">
    <source>
        <dbReference type="UniProtKB" id="P33072"/>
    </source>
</evidence>
<evidence type="ECO:0000250" key="3">
    <source>
        <dbReference type="UniProtKB" id="P97873"/>
    </source>
</evidence>
<evidence type="ECO:0000250" key="4">
    <source>
        <dbReference type="UniProtKB" id="Q08397"/>
    </source>
</evidence>
<evidence type="ECO:0000255" key="5"/>
<evidence type="ECO:0000256" key="6">
    <source>
        <dbReference type="SAM" id="MobiDB-lite"/>
    </source>
</evidence>
<evidence type="ECO:0000269" key="7">
    <source>
    </source>
</evidence>
<evidence type="ECO:0000305" key="8"/>